<name>LEXA_BARQU</name>
<reference key="1">
    <citation type="journal article" date="2004" name="Proc. Natl. Acad. Sci. U.S.A.">
        <title>The louse-borne human pathogen Bartonella quintana is a genomic derivative of the zoonotic agent Bartonella henselae.</title>
        <authorList>
            <person name="Alsmark U.C.M."/>
            <person name="Frank A.C."/>
            <person name="Karlberg E.O."/>
            <person name="Legault B.-A."/>
            <person name="Ardell D.H."/>
            <person name="Canbaeck B."/>
            <person name="Eriksson A.-S."/>
            <person name="Naeslund A.K."/>
            <person name="Handley S.A."/>
            <person name="Huvet M."/>
            <person name="La Scola B."/>
            <person name="Holmberg M."/>
            <person name="Andersson S.G.E."/>
        </authorList>
    </citation>
    <scope>NUCLEOTIDE SEQUENCE [LARGE SCALE GENOMIC DNA]</scope>
    <source>
        <strain>Toulouse</strain>
    </source>
</reference>
<protein>
    <recommendedName>
        <fullName evidence="1">LexA repressor</fullName>
        <ecNumber evidence="1">3.4.21.88</ecNumber>
    </recommendedName>
</protein>
<accession>Q6FZU5</accession>
<gene>
    <name evidence="1" type="primary">lexA</name>
    <name type="ordered locus">BQ06160</name>
</gene>
<keyword id="KW-0068">Autocatalytic cleavage</keyword>
<keyword id="KW-0227">DNA damage</keyword>
<keyword id="KW-0234">DNA repair</keyword>
<keyword id="KW-0235">DNA replication</keyword>
<keyword id="KW-0238">DNA-binding</keyword>
<keyword id="KW-0378">Hydrolase</keyword>
<keyword id="KW-0678">Repressor</keyword>
<keyword id="KW-0742">SOS response</keyword>
<keyword id="KW-0804">Transcription</keyword>
<keyword id="KW-0805">Transcription regulation</keyword>
<sequence length="237" mass="26908">MLTCKQYELLLFIHNHMKEIGVPPSFDEMKIALELTSKSGIHRLITALEERGFIRRLPNRARAVEVVRLPEKITFNLSSARKISPNVIENNRRKISKNSKNLNNFDIEDKKNVTVPIMGRIAAGVPVSAIQQQTNTLCLPADMISLGEHYALEVKDDSMIEAGILDKDTIIVRRQNTATPGEIIIALIDKEEATLKRYRRNGASIALEAANPHYETRIYRPERIEIQGKLIGLIRKY</sequence>
<organism>
    <name type="scientific">Bartonella quintana (strain Toulouse)</name>
    <name type="common">Rochalimaea quintana</name>
    <dbReference type="NCBI Taxonomy" id="283165"/>
    <lineage>
        <taxon>Bacteria</taxon>
        <taxon>Pseudomonadati</taxon>
        <taxon>Pseudomonadota</taxon>
        <taxon>Alphaproteobacteria</taxon>
        <taxon>Hyphomicrobiales</taxon>
        <taxon>Bartonellaceae</taxon>
        <taxon>Bartonella</taxon>
    </lineage>
</organism>
<dbReference type="EC" id="3.4.21.88" evidence="1"/>
<dbReference type="EMBL" id="BX897700">
    <property type="protein sequence ID" value="CAF26107.1"/>
    <property type="molecule type" value="Genomic_DNA"/>
</dbReference>
<dbReference type="RefSeq" id="WP_011179372.1">
    <property type="nucleotide sequence ID" value="NC_005955.1"/>
</dbReference>
<dbReference type="SMR" id="Q6FZU5"/>
<dbReference type="MEROPS" id="S24.001"/>
<dbReference type="KEGG" id="bqu:BQ06160"/>
<dbReference type="eggNOG" id="COG1974">
    <property type="taxonomic scope" value="Bacteria"/>
</dbReference>
<dbReference type="HOGENOM" id="CLU_066192_45_2_5"/>
<dbReference type="OrthoDB" id="9802364at2"/>
<dbReference type="Proteomes" id="UP000000597">
    <property type="component" value="Chromosome"/>
</dbReference>
<dbReference type="GO" id="GO:0003677">
    <property type="term" value="F:DNA binding"/>
    <property type="evidence" value="ECO:0007669"/>
    <property type="project" value="UniProtKB-UniRule"/>
</dbReference>
<dbReference type="GO" id="GO:0004252">
    <property type="term" value="F:serine-type endopeptidase activity"/>
    <property type="evidence" value="ECO:0007669"/>
    <property type="project" value="UniProtKB-UniRule"/>
</dbReference>
<dbReference type="GO" id="GO:0006281">
    <property type="term" value="P:DNA repair"/>
    <property type="evidence" value="ECO:0007669"/>
    <property type="project" value="UniProtKB-UniRule"/>
</dbReference>
<dbReference type="GO" id="GO:0006260">
    <property type="term" value="P:DNA replication"/>
    <property type="evidence" value="ECO:0007669"/>
    <property type="project" value="UniProtKB-UniRule"/>
</dbReference>
<dbReference type="GO" id="GO:0045892">
    <property type="term" value="P:negative regulation of DNA-templated transcription"/>
    <property type="evidence" value="ECO:0007669"/>
    <property type="project" value="UniProtKB-UniRule"/>
</dbReference>
<dbReference type="GO" id="GO:0006508">
    <property type="term" value="P:proteolysis"/>
    <property type="evidence" value="ECO:0007669"/>
    <property type="project" value="InterPro"/>
</dbReference>
<dbReference type="GO" id="GO:0009432">
    <property type="term" value="P:SOS response"/>
    <property type="evidence" value="ECO:0007669"/>
    <property type="project" value="UniProtKB-UniRule"/>
</dbReference>
<dbReference type="CDD" id="cd06529">
    <property type="entry name" value="S24_LexA-like"/>
    <property type="match status" value="1"/>
</dbReference>
<dbReference type="FunFam" id="2.10.109.10:FF:000001">
    <property type="entry name" value="LexA repressor"/>
    <property type="match status" value="1"/>
</dbReference>
<dbReference type="Gene3D" id="2.10.109.10">
    <property type="entry name" value="Umud Fragment, subunit A"/>
    <property type="match status" value="1"/>
</dbReference>
<dbReference type="Gene3D" id="1.10.10.10">
    <property type="entry name" value="Winged helix-like DNA-binding domain superfamily/Winged helix DNA-binding domain"/>
    <property type="match status" value="1"/>
</dbReference>
<dbReference type="HAMAP" id="MF_00015">
    <property type="entry name" value="LexA"/>
    <property type="match status" value="1"/>
</dbReference>
<dbReference type="InterPro" id="IPR006200">
    <property type="entry name" value="LexA"/>
</dbReference>
<dbReference type="InterPro" id="IPR039418">
    <property type="entry name" value="LexA-like"/>
</dbReference>
<dbReference type="InterPro" id="IPR036286">
    <property type="entry name" value="LexA/Signal_pep-like_sf"/>
</dbReference>
<dbReference type="InterPro" id="IPR006199">
    <property type="entry name" value="LexA_DNA-bd_dom"/>
</dbReference>
<dbReference type="InterPro" id="IPR050077">
    <property type="entry name" value="LexA_repressor"/>
</dbReference>
<dbReference type="InterPro" id="IPR006197">
    <property type="entry name" value="Peptidase_S24_LexA"/>
</dbReference>
<dbReference type="InterPro" id="IPR015927">
    <property type="entry name" value="Peptidase_S24_S26A/B/C"/>
</dbReference>
<dbReference type="InterPro" id="IPR036388">
    <property type="entry name" value="WH-like_DNA-bd_sf"/>
</dbReference>
<dbReference type="InterPro" id="IPR036390">
    <property type="entry name" value="WH_DNA-bd_sf"/>
</dbReference>
<dbReference type="NCBIfam" id="TIGR00498">
    <property type="entry name" value="lexA"/>
    <property type="match status" value="1"/>
</dbReference>
<dbReference type="PANTHER" id="PTHR33516">
    <property type="entry name" value="LEXA REPRESSOR"/>
    <property type="match status" value="1"/>
</dbReference>
<dbReference type="PANTHER" id="PTHR33516:SF2">
    <property type="entry name" value="LEXA REPRESSOR-RELATED"/>
    <property type="match status" value="1"/>
</dbReference>
<dbReference type="Pfam" id="PF01726">
    <property type="entry name" value="LexA_DNA_bind"/>
    <property type="match status" value="1"/>
</dbReference>
<dbReference type="Pfam" id="PF00717">
    <property type="entry name" value="Peptidase_S24"/>
    <property type="match status" value="1"/>
</dbReference>
<dbReference type="PRINTS" id="PR00726">
    <property type="entry name" value="LEXASERPTASE"/>
</dbReference>
<dbReference type="SUPFAM" id="SSF51306">
    <property type="entry name" value="LexA/Signal peptidase"/>
    <property type="match status" value="1"/>
</dbReference>
<dbReference type="SUPFAM" id="SSF46785">
    <property type="entry name" value="Winged helix' DNA-binding domain"/>
    <property type="match status" value="1"/>
</dbReference>
<comment type="function">
    <text evidence="1">Represses a number of genes involved in the response to DNA damage (SOS response), including recA and lexA. In the presence of single-stranded DNA, RecA interacts with LexA causing an autocatalytic cleavage which disrupts the DNA-binding part of LexA, leading to derepression of the SOS regulon and eventually DNA repair.</text>
</comment>
<comment type="catalytic activity">
    <reaction evidence="1">
        <text>Hydrolysis of Ala-|-Gly bond in repressor LexA.</text>
        <dbReference type="EC" id="3.4.21.88"/>
    </reaction>
</comment>
<comment type="subunit">
    <text evidence="1">Homodimer.</text>
</comment>
<comment type="similarity">
    <text evidence="1">Belongs to the peptidase S24 family.</text>
</comment>
<feature type="chain" id="PRO_0000170012" description="LexA repressor">
    <location>
        <begin position="1"/>
        <end position="237"/>
    </location>
</feature>
<feature type="DNA-binding region" description="H-T-H motif" evidence="1">
    <location>
        <begin position="26"/>
        <end position="46"/>
    </location>
</feature>
<feature type="active site" description="For autocatalytic cleavage activity" evidence="1">
    <location>
        <position position="158"/>
    </location>
</feature>
<feature type="active site" description="For autocatalytic cleavage activity" evidence="1">
    <location>
        <position position="196"/>
    </location>
</feature>
<feature type="site" description="Cleavage; by autolysis" evidence="1">
    <location>
        <begin position="123"/>
        <end position="124"/>
    </location>
</feature>
<evidence type="ECO:0000255" key="1">
    <source>
        <dbReference type="HAMAP-Rule" id="MF_00015"/>
    </source>
</evidence>
<proteinExistence type="inferred from homology"/>